<sequence length="432" mass="47345">MGNNVVVLGTQWGDEGKGKIVDLLTERAKYVVRYQGGHNAGHTLVINGEKTVLHLIPSGILRENVTSIIGNGVVLSPAALMKEMKELEDRGIPVRERLLLSEACPLILDYHVALDNAREKARGAKAIGTTGRGIGPAYEDKVARRGLRVGDLFDKETFAEKLKEVMEYHNFQLVNYYKAEAVDYQKVLDDTMAVADILTSMVVDVSDLLDQARQRGDFVMFEGAQGTLLDIDHGTYPYVTSSNTTAGGVATGSGLGPRYVDYVLGILKAYSTRVGAGPFPTELFDETGEFLCKQGNEFGATTGRRRRTGWLDTVAVRRAVQLNSLSGFCLTKLDVLDGLKEVKLCVAYRMPDGREVTTTPLAADDWKGVEPIYETMPGWSESTFGVKDRSGLPQAALNYIKRIEELTGVPIDIISTGPDRTETMILRDPFDA</sequence>
<keyword id="KW-0963">Cytoplasm</keyword>
<keyword id="KW-0342">GTP-binding</keyword>
<keyword id="KW-0436">Ligase</keyword>
<keyword id="KW-0460">Magnesium</keyword>
<keyword id="KW-0479">Metal-binding</keyword>
<keyword id="KW-0547">Nucleotide-binding</keyword>
<keyword id="KW-0658">Purine biosynthesis</keyword>
<feature type="chain" id="PRO_1000194759" description="Adenylosuccinate synthetase">
    <location>
        <begin position="1"/>
        <end position="432"/>
    </location>
</feature>
<feature type="active site" description="Proton acceptor" evidence="1">
    <location>
        <position position="14"/>
    </location>
</feature>
<feature type="active site" description="Proton donor" evidence="1">
    <location>
        <position position="42"/>
    </location>
</feature>
<feature type="binding site" evidence="1">
    <location>
        <begin position="13"/>
        <end position="19"/>
    </location>
    <ligand>
        <name>GTP</name>
        <dbReference type="ChEBI" id="CHEBI:37565"/>
    </ligand>
</feature>
<feature type="binding site" description="in other chain" evidence="1">
    <location>
        <begin position="14"/>
        <end position="17"/>
    </location>
    <ligand>
        <name>IMP</name>
        <dbReference type="ChEBI" id="CHEBI:58053"/>
        <note>ligand shared between dimeric partners</note>
    </ligand>
</feature>
<feature type="binding site" evidence="1">
    <location>
        <position position="14"/>
    </location>
    <ligand>
        <name>Mg(2+)</name>
        <dbReference type="ChEBI" id="CHEBI:18420"/>
    </ligand>
</feature>
<feature type="binding site" description="in other chain" evidence="1">
    <location>
        <begin position="39"/>
        <end position="42"/>
    </location>
    <ligand>
        <name>IMP</name>
        <dbReference type="ChEBI" id="CHEBI:58053"/>
        <note>ligand shared between dimeric partners</note>
    </ligand>
</feature>
<feature type="binding site" evidence="1">
    <location>
        <begin position="41"/>
        <end position="43"/>
    </location>
    <ligand>
        <name>GTP</name>
        <dbReference type="ChEBI" id="CHEBI:37565"/>
    </ligand>
</feature>
<feature type="binding site" evidence="1">
    <location>
        <position position="41"/>
    </location>
    <ligand>
        <name>Mg(2+)</name>
        <dbReference type="ChEBI" id="CHEBI:18420"/>
    </ligand>
</feature>
<feature type="binding site" description="in other chain" evidence="1">
    <location>
        <position position="130"/>
    </location>
    <ligand>
        <name>IMP</name>
        <dbReference type="ChEBI" id="CHEBI:58053"/>
        <note>ligand shared between dimeric partners</note>
    </ligand>
</feature>
<feature type="binding site" evidence="1">
    <location>
        <position position="144"/>
    </location>
    <ligand>
        <name>IMP</name>
        <dbReference type="ChEBI" id="CHEBI:58053"/>
        <note>ligand shared between dimeric partners</note>
    </ligand>
</feature>
<feature type="binding site" description="in other chain" evidence="1">
    <location>
        <position position="225"/>
    </location>
    <ligand>
        <name>IMP</name>
        <dbReference type="ChEBI" id="CHEBI:58053"/>
        <note>ligand shared between dimeric partners</note>
    </ligand>
</feature>
<feature type="binding site" description="in other chain" evidence="1">
    <location>
        <position position="240"/>
    </location>
    <ligand>
        <name>IMP</name>
        <dbReference type="ChEBI" id="CHEBI:58053"/>
        <note>ligand shared between dimeric partners</note>
    </ligand>
</feature>
<feature type="binding site" evidence="1">
    <location>
        <begin position="300"/>
        <end position="306"/>
    </location>
    <ligand>
        <name>substrate</name>
    </ligand>
</feature>
<feature type="binding site" description="in other chain" evidence="1">
    <location>
        <position position="304"/>
    </location>
    <ligand>
        <name>IMP</name>
        <dbReference type="ChEBI" id="CHEBI:58053"/>
        <note>ligand shared between dimeric partners</note>
    </ligand>
</feature>
<feature type="binding site" evidence="1">
    <location>
        <position position="306"/>
    </location>
    <ligand>
        <name>GTP</name>
        <dbReference type="ChEBI" id="CHEBI:37565"/>
    </ligand>
</feature>
<feature type="binding site" evidence="1">
    <location>
        <begin position="332"/>
        <end position="334"/>
    </location>
    <ligand>
        <name>GTP</name>
        <dbReference type="ChEBI" id="CHEBI:37565"/>
    </ligand>
</feature>
<feature type="binding site" evidence="1">
    <location>
        <begin position="415"/>
        <end position="417"/>
    </location>
    <ligand>
        <name>GTP</name>
        <dbReference type="ChEBI" id="CHEBI:37565"/>
    </ligand>
</feature>
<gene>
    <name evidence="1" type="primary">purA</name>
    <name type="ordered locus">EFER_4230</name>
</gene>
<comment type="function">
    <text evidence="1">Plays an important role in the de novo pathway of purine nucleotide biosynthesis. Catalyzes the first committed step in the biosynthesis of AMP from IMP.</text>
</comment>
<comment type="catalytic activity">
    <reaction evidence="1">
        <text>IMP + L-aspartate + GTP = N(6)-(1,2-dicarboxyethyl)-AMP + GDP + phosphate + 2 H(+)</text>
        <dbReference type="Rhea" id="RHEA:15753"/>
        <dbReference type="ChEBI" id="CHEBI:15378"/>
        <dbReference type="ChEBI" id="CHEBI:29991"/>
        <dbReference type="ChEBI" id="CHEBI:37565"/>
        <dbReference type="ChEBI" id="CHEBI:43474"/>
        <dbReference type="ChEBI" id="CHEBI:57567"/>
        <dbReference type="ChEBI" id="CHEBI:58053"/>
        <dbReference type="ChEBI" id="CHEBI:58189"/>
        <dbReference type="EC" id="6.3.4.4"/>
    </reaction>
</comment>
<comment type="cofactor">
    <cofactor evidence="1">
        <name>Mg(2+)</name>
        <dbReference type="ChEBI" id="CHEBI:18420"/>
    </cofactor>
    <text evidence="1">Binds 1 Mg(2+) ion per subunit.</text>
</comment>
<comment type="pathway">
    <text evidence="1">Purine metabolism; AMP biosynthesis via de novo pathway; AMP from IMP: step 1/2.</text>
</comment>
<comment type="subunit">
    <text evidence="1">Homodimer.</text>
</comment>
<comment type="subcellular location">
    <subcellularLocation>
        <location evidence="1">Cytoplasm</location>
    </subcellularLocation>
</comment>
<comment type="similarity">
    <text evidence="1">Belongs to the adenylosuccinate synthetase family.</text>
</comment>
<accession>B7LLV9</accession>
<dbReference type="EC" id="6.3.4.4" evidence="1"/>
<dbReference type="EMBL" id="CU928158">
    <property type="protein sequence ID" value="CAQ91649.1"/>
    <property type="molecule type" value="Genomic_DNA"/>
</dbReference>
<dbReference type="RefSeq" id="WP_000527955.1">
    <property type="nucleotide sequence ID" value="NC_011740.1"/>
</dbReference>
<dbReference type="SMR" id="B7LLV9"/>
<dbReference type="GeneID" id="75202411"/>
<dbReference type="KEGG" id="efe:EFER_4230"/>
<dbReference type="HOGENOM" id="CLU_029848_0_0_6"/>
<dbReference type="OrthoDB" id="9807553at2"/>
<dbReference type="UniPathway" id="UPA00075">
    <property type="reaction ID" value="UER00335"/>
</dbReference>
<dbReference type="Proteomes" id="UP000000745">
    <property type="component" value="Chromosome"/>
</dbReference>
<dbReference type="GO" id="GO:0005737">
    <property type="term" value="C:cytoplasm"/>
    <property type="evidence" value="ECO:0007669"/>
    <property type="project" value="UniProtKB-SubCell"/>
</dbReference>
<dbReference type="GO" id="GO:0004019">
    <property type="term" value="F:adenylosuccinate synthase activity"/>
    <property type="evidence" value="ECO:0007669"/>
    <property type="project" value="UniProtKB-UniRule"/>
</dbReference>
<dbReference type="GO" id="GO:0005525">
    <property type="term" value="F:GTP binding"/>
    <property type="evidence" value="ECO:0007669"/>
    <property type="project" value="UniProtKB-UniRule"/>
</dbReference>
<dbReference type="GO" id="GO:0000287">
    <property type="term" value="F:magnesium ion binding"/>
    <property type="evidence" value="ECO:0007669"/>
    <property type="project" value="UniProtKB-UniRule"/>
</dbReference>
<dbReference type="GO" id="GO:0044208">
    <property type="term" value="P:'de novo' AMP biosynthetic process"/>
    <property type="evidence" value="ECO:0007669"/>
    <property type="project" value="UniProtKB-UniRule"/>
</dbReference>
<dbReference type="GO" id="GO:0046040">
    <property type="term" value="P:IMP metabolic process"/>
    <property type="evidence" value="ECO:0007669"/>
    <property type="project" value="TreeGrafter"/>
</dbReference>
<dbReference type="CDD" id="cd03108">
    <property type="entry name" value="AdSS"/>
    <property type="match status" value="1"/>
</dbReference>
<dbReference type="FunFam" id="1.10.300.10:FF:000001">
    <property type="entry name" value="Adenylosuccinate synthetase"/>
    <property type="match status" value="1"/>
</dbReference>
<dbReference type="FunFam" id="3.90.170.10:FF:000001">
    <property type="entry name" value="Adenylosuccinate synthetase"/>
    <property type="match status" value="1"/>
</dbReference>
<dbReference type="Gene3D" id="3.40.440.10">
    <property type="entry name" value="Adenylosuccinate Synthetase, subunit A, domain 1"/>
    <property type="match status" value="1"/>
</dbReference>
<dbReference type="Gene3D" id="1.10.300.10">
    <property type="entry name" value="Adenylosuccinate Synthetase, subunit A, domain 2"/>
    <property type="match status" value="1"/>
</dbReference>
<dbReference type="Gene3D" id="3.90.170.10">
    <property type="entry name" value="Adenylosuccinate Synthetase, subunit A, domain 3"/>
    <property type="match status" value="1"/>
</dbReference>
<dbReference type="HAMAP" id="MF_00011">
    <property type="entry name" value="Adenylosucc_synth"/>
    <property type="match status" value="1"/>
</dbReference>
<dbReference type="InterPro" id="IPR018220">
    <property type="entry name" value="Adenylosuccin_syn_GTP-bd"/>
</dbReference>
<dbReference type="InterPro" id="IPR033128">
    <property type="entry name" value="Adenylosuccin_syn_Lys_AS"/>
</dbReference>
<dbReference type="InterPro" id="IPR042109">
    <property type="entry name" value="Adenylosuccinate_synth_dom1"/>
</dbReference>
<dbReference type="InterPro" id="IPR042110">
    <property type="entry name" value="Adenylosuccinate_synth_dom2"/>
</dbReference>
<dbReference type="InterPro" id="IPR042111">
    <property type="entry name" value="Adenylosuccinate_synth_dom3"/>
</dbReference>
<dbReference type="InterPro" id="IPR001114">
    <property type="entry name" value="Adenylosuccinate_synthetase"/>
</dbReference>
<dbReference type="InterPro" id="IPR027417">
    <property type="entry name" value="P-loop_NTPase"/>
</dbReference>
<dbReference type="NCBIfam" id="NF002223">
    <property type="entry name" value="PRK01117.1"/>
    <property type="match status" value="1"/>
</dbReference>
<dbReference type="NCBIfam" id="TIGR00184">
    <property type="entry name" value="purA"/>
    <property type="match status" value="1"/>
</dbReference>
<dbReference type="PANTHER" id="PTHR11846">
    <property type="entry name" value="ADENYLOSUCCINATE SYNTHETASE"/>
    <property type="match status" value="1"/>
</dbReference>
<dbReference type="PANTHER" id="PTHR11846:SF0">
    <property type="entry name" value="ADENYLOSUCCINATE SYNTHETASE"/>
    <property type="match status" value="1"/>
</dbReference>
<dbReference type="Pfam" id="PF00709">
    <property type="entry name" value="Adenylsucc_synt"/>
    <property type="match status" value="1"/>
</dbReference>
<dbReference type="SMART" id="SM00788">
    <property type="entry name" value="Adenylsucc_synt"/>
    <property type="match status" value="1"/>
</dbReference>
<dbReference type="SUPFAM" id="SSF52540">
    <property type="entry name" value="P-loop containing nucleoside triphosphate hydrolases"/>
    <property type="match status" value="1"/>
</dbReference>
<dbReference type="PROSITE" id="PS01266">
    <property type="entry name" value="ADENYLOSUCCIN_SYN_1"/>
    <property type="match status" value="1"/>
</dbReference>
<dbReference type="PROSITE" id="PS00513">
    <property type="entry name" value="ADENYLOSUCCIN_SYN_2"/>
    <property type="match status" value="1"/>
</dbReference>
<reference key="1">
    <citation type="journal article" date="2009" name="PLoS Genet.">
        <title>Organised genome dynamics in the Escherichia coli species results in highly diverse adaptive paths.</title>
        <authorList>
            <person name="Touchon M."/>
            <person name="Hoede C."/>
            <person name="Tenaillon O."/>
            <person name="Barbe V."/>
            <person name="Baeriswyl S."/>
            <person name="Bidet P."/>
            <person name="Bingen E."/>
            <person name="Bonacorsi S."/>
            <person name="Bouchier C."/>
            <person name="Bouvet O."/>
            <person name="Calteau A."/>
            <person name="Chiapello H."/>
            <person name="Clermont O."/>
            <person name="Cruveiller S."/>
            <person name="Danchin A."/>
            <person name="Diard M."/>
            <person name="Dossat C."/>
            <person name="Karoui M.E."/>
            <person name="Frapy E."/>
            <person name="Garry L."/>
            <person name="Ghigo J.M."/>
            <person name="Gilles A.M."/>
            <person name="Johnson J."/>
            <person name="Le Bouguenec C."/>
            <person name="Lescat M."/>
            <person name="Mangenot S."/>
            <person name="Martinez-Jehanne V."/>
            <person name="Matic I."/>
            <person name="Nassif X."/>
            <person name="Oztas S."/>
            <person name="Petit M.A."/>
            <person name="Pichon C."/>
            <person name="Rouy Z."/>
            <person name="Ruf C.S."/>
            <person name="Schneider D."/>
            <person name="Tourret J."/>
            <person name="Vacherie B."/>
            <person name="Vallenet D."/>
            <person name="Medigue C."/>
            <person name="Rocha E.P.C."/>
            <person name="Denamur E."/>
        </authorList>
    </citation>
    <scope>NUCLEOTIDE SEQUENCE [LARGE SCALE GENOMIC DNA]</scope>
    <source>
        <strain>ATCC 35469 / DSM 13698 / BCRC 15582 / CCUG 18766 / IAM 14443 / JCM 21226 / LMG 7866 / NBRC 102419 / NCTC 12128 / CDC 0568-73</strain>
    </source>
</reference>
<protein>
    <recommendedName>
        <fullName evidence="1">Adenylosuccinate synthetase</fullName>
        <shortName evidence="1">AMPSase</shortName>
        <shortName evidence="1">AdSS</shortName>
        <ecNumber evidence="1">6.3.4.4</ecNumber>
    </recommendedName>
    <alternativeName>
        <fullName evidence="1">IMP--aspartate ligase</fullName>
    </alternativeName>
</protein>
<evidence type="ECO:0000255" key="1">
    <source>
        <dbReference type="HAMAP-Rule" id="MF_00011"/>
    </source>
</evidence>
<proteinExistence type="inferred from homology"/>
<organism>
    <name type="scientific">Escherichia fergusonii (strain ATCC 35469 / DSM 13698 / CCUG 18766 / IAM 14443 / JCM 21226 / LMG 7866 / NBRC 102419 / NCTC 12128 / CDC 0568-73)</name>
    <dbReference type="NCBI Taxonomy" id="585054"/>
    <lineage>
        <taxon>Bacteria</taxon>
        <taxon>Pseudomonadati</taxon>
        <taxon>Pseudomonadota</taxon>
        <taxon>Gammaproteobacteria</taxon>
        <taxon>Enterobacterales</taxon>
        <taxon>Enterobacteriaceae</taxon>
        <taxon>Escherichia</taxon>
    </lineage>
</organism>
<name>PURA_ESCF3</name>